<feature type="chain" id="PRO_1000127718" description="Glucokinase">
    <location>
        <begin position="1"/>
        <end position="321"/>
    </location>
</feature>
<feature type="binding site" evidence="1">
    <location>
        <begin position="8"/>
        <end position="13"/>
    </location>
    <ligand>
        <name>ATP</name>
        <dbReference type="ChEBI" id="CHEBI:30616"/>
    </ligand>
</feature>
<comment type="catalytic activity">
    <reaction evidence="1">
        <text>D-glucose + ATP = D-glucose 6-phosphate + ADP + H(+)</text>
        <dbReference type="Rhea" id="RHEA:17825"/>
        <dbReference type="ChEBI" id="CHEBI:4167"/>
        <dbReference type="ChEBI" id="CHEBI:15378"/>
        <dbReference type="ChEBI" id="CHEBI:30616"/>
        <dbReference type="ChEBI" id="CHEBI:61548"/>
        <dbReference type="ChEBI" id="CHEBI:456216"/>
        <dbReference type="EC" id="2.7.1.2"/>
    </reaction>
</comment>
<comment type="subcellular location">
    <subcellularLocation>
        <location evidence="1">Cytoplasm</location>
    </subcellularLocation>
</comment>
<comment type="similarity">
    <text evidence="1">Belongs to the bacterial glucokinase family.</text>
</comment>
<organism>
    <name type="scientific">Salmonella dublin (strain CT_02021853)</name>
    <dbReference type="NCBI Taxonomy" id="439851"/>
    <lineage>
        <taxon>Bacteria</taxon>
        <taxon>Pseudomonadati</taxon>
        <taxon>Pseudomonadota</taxon>
        <taxon>Gammaproteobacteria</taxon>
        <taxon>Enterobacterales</taxon>
        <taxon>Enterobacteriaceae</taxon>
        <taxon>Salmonella</taxon>
    </lineage>
</organism>
<dbReference type="EC" id="2.7.1.2" evidence="1"/>
<dbReference type="EMBL" id="CP001144">
    <property type="protein sequence ID" value="ACH75801.1"/>
    <property type="molecule type" value="Genomic_DNA"/>
</dbReference>
<dbReference type="RefSeq" id="WP_000170380.1">
    <property type="nucleotide sequence ID" value="NC_011205.1"/>
</dbReference>
<dbReference type="SMR" id="B5FQA0"/>
<dbReference type="KEGG" id="sed:SeD_A2765"/>
<dbReference type="HOGENOM" id="CLU_042582_1_0_6"/>
<dbReference type="Proteomes" id="UP000008322">
    <property type="component" value="Chromosome"/>
</dbReference>
<dbReference type="GO" id="GO:0005829">
    <property type="term" value="C:cytosol"/>
    <property type="evidence" value="ECO:0007669"/>
    <property type="project" value="TreeGrafter"/>
</dbReference>
<dbReference type="GO" id="GO:0005524">
    <property type="term" value="F:ATP binding"/>
    <property type="evidence" value="ECO:0007669"/>
    <property type="project" value="UniProtKB-UniRule"/>
</dbReference>
<dbReference type="GO" id="GO:0005536">
    <property type="term" value="F:D-glucose binding"/>
    <property type="evidence" value="ECO:0007669"/>
    <property type="project" value="InterPro"/>
</dbReference>
<dbReference type="GO" id="GO:0004340">
    <property type="term" value="F:glucokinase activity"/>
    <property type="evidence" value="ECO:0007669"/>
    <property type="project" value="UniProtKB-UniRule"/>
</dbReference>
<dbReference type="GO" id="GO:0006096">
    <property type="term" value="P:glycolytic process"/>
    <property type="evidence" value="ECO:0007669"/>
    <property type="project" value="UniProtKB-UniRule"/>
</dbReference>
<dbReference type="CDD" id="cd24008">
    <property type="entry name" value="ASKHA_NBD_GLK"/>
    <property type="match status" value="1"/>
</dbReference>
<dbReference type="FunFam" id="3.30.420.40:FF:000045">
    <property type="entry name" value="Glucokinase"/>
    <property type="match status" value="1"/>
</dbReference>
<dbReference type="FunFam" id="3.40.367.20:FF:000002">
    <property type="entry name" value="Glucokinase"/>
    <property type="match status" value="1"/>
</dbReference>
<dbReference type="Gene3D" id="3.30.420.40">
    <property type="match status" value="1"/>
</dbReference>
<dbReference type="Gene3D" id="3.40.367.20">
    <property type="match status" value="1"/>
</dbReference>
<dbReference type="HAMAP" id="MF_00524">
    <property type="entry name" value="Glucokinase"/>
    <property type="match status" value="1"/>
</dbReference>
<dbReference type="InterPro" id="IPR043129">
    <property type="entry name" value="ATPase_NBD"/>
</dbReference>
<dbReference type="InterPro" id="IPR050201">
    <property type="entry name" value="Bacterial_glucokinase"/>
</dbReference>
<dbReference type="InterPro" id="IPR003836">
    <property type="entry name" value="Glucokinase"/>
</dbReference>
<dbReference type="NCBIfam" id="TIGR00749">
    <property type="entry name" value="glk"/>
    <property type="match status" value="1"/>
</dbReference>
<dbReference type="NCBIfam" id="NF001414">
    <property type="entry name" value="PRK00292.1-1"/>
    <property type="match status" value="1"/>
</dbReference>
<dbReference type="NCBIfam" id="NF001416">
    <property type="entry name" value="PRK00292.1-3"/>
    <property type="match status" value="1"/>
</dbReference>
<dbReference type="PANTHER" id="PTHR47690">
    <property type="entry name" value="GLUCOKINASE"/>
    <property type="match status" value="1"/>
</dbReference>
<dbReference type="PANTHER" id="PTHR47690:SF1">
    <property type="entry name" value="GLUCOKINASE"/>
    <property type="match status" value="1"/>
</dbReference>
<dbReference type="Pfam" id="PF02685">
    <property type="entry name" value="Glucokinase"/>
    <property type="match status" value="1"/>
</dbReference>
<dbReference type="SUPFAM" id="SSF53067">
    <property type="entry name" value="Actin-like ATPase domain"/>
    <property type="match status" value="1"/>
</dbReference>
<sequence>MTKYALVGDVGGTNARLALCDIASGEISQAKTYSGLDYPSLEAVVRVYLDEHSVSVEDGCIAIACPITGDWVAMTNHTWAFSIAEMKKNLGFSHLEIINDFTAVSMAIPMLKKEHLIQFGGGEPVDGKPIAVYGAGTGLGVAHLVHVDKRWISLPGEGGHVDFAPNSEEEAMILEILRAEIGHVSAERVLSGPGLVNLYRAIVKSDNRLPENLRPKDITERALADSCIDCRRALSLFCVIMGRFGGDLALTMGTFGGVYIAGGIVPRFLEFFKASGFRGGFEDKGRFKDYVHGIPVYLIVHDNPGLLGSGAHLRQTLGHIL</sequence>
<name>GLK_SALDC</name>
<reference key="1">
    <citation type="journal article" date="2011" name="J. Bacteriol.">
        <title>Comparative genomics of 28 Salmonella enterica isolates: evidence for CRISPR-mediated adaptive sublineage evolution.</title>
        <authorList>
            <person name="Fricke W.F."/>
            <person name="Mammel M.K."/>
            <person name="McDermott P.F."/>
            <person name="Tartera C."/>
            <person name="White D.G."/>
            <person name="Leclerc J.E."/>
            <person name="Ravel J."/>
            <person name="Cebula T.A."/>
        </authorList>
    </citation>
    <scope>NUCLEOTIDE SEQUENCE [LARGE SCALE GENOMIC DNA]</scope>
    <source>
        <strain>CT_02021853</strain>
    </source>
</reference>
<keyword id="KW-0067">ATP-binding</keyword>
<keyword id="KW-0963">Cytoplasm</keyword>
<keyword id="KW-0324">Glycolysis</keyword>
<keyword id="KW-0418">Kinase</keyword>
<keyword id="KW-0547">Nucleotide-binding</keyword>
<keyword id="KW-0808">Transferase</keyword>
<accession>B5FQA0</accession>
<protein>
    <recommendedName>
        <fullName evidence="1">Glucokinase</fullName>
        <ecNumber evidence="1">2.7.1.2</ecNumber>
    </recommendedName>
    <alternativeName>
        <fullName evidence="1">Glucose kinase</fullName>
    </alternativeName>
</protein>
<proteinExistence type="inferred from homology"/>
<evidence type="ECO:0000255" key="1">
    <source>
        <dbReference type="HAMAP-Rule" id="MF_00524"/>
    </source>
</evidence>
<gene>
    <name evidence="1" type="primary">glk</name>
    <name type="ordered locus">SeD_A2765</name>
</gene>